<dbReference type="EMBL" id="X89756">
    <property type="protein sequence ID" value="CAA61903.1"/>
    <property type="molecule type" value="Genomic_DNA"/>
</dbReference>
<dbReference type="EMBL" id="AL513382">
    <property type="protein sequence ID" value="CAD01894.1"/>
    <property type="molecule type" value="Genomic_DNA"/>
</dbReference>
<dbReference type="EMBL" id="AE014613">
    <property type="protein sequence ID" value="AAO68989.1"/>
    <property type="molecule type" value="Genomic_DNA"/>
</dbReference>
<dbReference type="RefSeq" id="NP_456059.1">
    <property type="nucleotide sequence ID" value="NC_003198.1"/>
</dbReference>
<dbReference type="RefSeq" id="WP_000824321.1">
    <property type="nucleotide sequence ID" value="NZ_WSUR01000011.1"/>
</dbReference>
<dbReference type="SMR" id="Q56111"/>
<dbReference type="STRING" id="220341.gene:17585584"/>
<dbReference type="TCDB" id="1.B.1.1.22">
    <property type="family name" value="the general bacterial porin (gbp) family"/>
</dbReference>
<dbReference type="KEGG" id="stt:t1341"/>
<dbReference type="KEGG" id="sty:STY1649"/>
<dbReference type="PATRIC" id="fig|220341.7.peg.1660"/>
<dbReference type="eggNOG" id="COG3203">
    <property type="taxonomic scope" value="Bacteria"/>
</dbReference>
<dbReference type="HOGENOM" id="CLU_058202_0_0_6"/>
<dbReference type="OMA" id="QADNFMT"/>
<dbReference type="OrthoDB" id="7055111at2"/>
<dbReference type="Proteomes" id="UP000000541">
    <property type="component" value="Chromosome"/>
</dbReference>
<dbReference type="Proteomes" id="UP000002670">
    <property type="component" value="Chromosome"/>
</dbReference>
<dbReference type="GO" id="GO:0009279">
    <property type="term" value="C:cell outer membrane"/>
    <property type="evidence" value="ECO:0007669"/>
    <property type="project" value="UniProtKB-SubCell"/>
</dbReference>
<dbReference type="GO" id="GO:0046930">
    <property type="term" value="C:pore complex"/>
    <property type="evidence" value="ECO:0007669"/>
    <property type="project" value="UniProtKB-KW"/>
</dbReference>
<dbReference type="GO" id="GO:0015288">
    <property type="term" value="F:porin activity"/>
    <property type="evidence" value="ECO:0007669"/>
    <property type="project" value="UniProtKB-KW"/>
</dbReference>
<dbReference type="GO" id="GO:0034220">
    <property type="term" value="P:monoatomic ion transmembrane transport"/>
    <property type="evidence" value="ECO:0007669"/>
    <property type="project" value="InterPro"/>
</dbReference>
<dbReference type="CDD" id="cd00342">
    <property type="entry name" value="gram_neg_porins"/>
    <property type="match status" value="1"/>
</dbReference>
<dbReference type="Gene3D" id="2.40.160.10">
    <property type="entry name" value="Porin"/>
    <property type="match status" value="1"/>
</dbReference>
<dbReference type="InterPro" id="IPR050298">
    <property type="entry name" value="Gram-neg_bact_OMP"/>
</dbReference>
<dbReference type="InterPro" id="IPR033900">
    <property type="entry name" value="Gram_neg_porin_domain"/>
</dbReference>
<dbReference type="InterPro" id="IPR023614">
    <property type="entry name" value="Porin_dom_sf"/>
</dbReference>
<dbReference type="InterPro" id="IPR001897">
    <property type="entry name" value="Porin_gammaproteobac"/>
</dbReference>
<dbReference type="InterPro" id="IPR001702">
    <property type="entry name" value="Porin_Gram-ve"/>
</dbReference>
<dbReference type="NCBIfam" id="NF007841">
    <property type="entry name" value="PRK10554.1"/>
    <property type="match status" value="1"/>
</dbReference>
<dbReference type="PANTHER" id="PTHR34501:SF8">
    <property type="entry name" value="OUTER MEMBRANE PORIN N-RELATED"/>
    <property type="match status" value="1"/>
</dbReference>
<dbReference type="PANTHER" id="PTHR34501">
    <property type="entry name" value="PROTEIN YDDL-RELATED"/>
    <property type="match status" value="1"/>
</dbReference>
<dbReference type="Pfam" id="PF00267">
    <property type="entry name" value="Porin_1"/>
    <property type="match status" value="1"/>
</dbReference>
<dbReference type="PRINTS" id="PR00183">
    <property type="entry name" value="ECOLIPORIN"/>
</dbReference>
<dbReference type="PRINTS" id="PR00182">
    <property type="entry name" value="ECOLNEIPORIN"/>
</dbReference>
<dbReference type="SUPFAM" id="SSF56935">
    <property type="entry name" value="Porins"/>
    <property type="match status" value="1"/>
</dbReference>
<name>OMPS2_SALTI</name>
<reference key="1">
    <citation type="submission" date="1995-07" db="EMBL/GenBank/DDBJ databases">
        <authorList>
            <person name="Fernandez-Mora M."/>
            <person name="Calva E."/>
        </authorList>
    </citation>
    <scope>NUCLEOTIDE SEQUENCE [GENOMIC DNA]</scope>
    <source>
        <strain>IMSS-1</strain>
    </source>
</reference>
<reference key="2">
    <citation type="journal article" date="2001" name="Nature">
        <title>Complete genome sequence of a multiple drug resistant Salmonella enterica serovar Typhi CT18.</title>
        <authorList>
            <person name="Parkhill J."/>
            <person name="Dougan G."/>
            <person name="James K.D."/>
            <person name="Thomson N.R."/>
            <person name="Pickard D."/>
            <person name="Wain J."/>
            <person name="Churcher C.M."/>
            <person name="Mungall K.L."/>
            <person name="Bentley S.D."/>
            <person name="Holden M.T.G."/>
            <person name="Sebaihia M."/>
            <person name="Baker S."/>
            <person name="Basham D."/>
            <person name="Brooks K."/>
            <person name="Chillingworth T."/>
            <person name="Connerton P."/>
            <person name="Cronin A."/>
            <person name="Davis P."/>
            <person name="Davies R.M."/>
            <person name="Dowd L."/>
            <person name="White N."/>
            <person name="Farrar J."/>
            <person name="Feltwell T."/>
            <person name="Hamlin N."/>
            <person name="Haque A."/>
            <person name="Hien T.T."/>
            <person name="Holroyd S."/>
            <person name="Jagels K."/>
            <person name="Krogh A."/>
            <person name="Larsen T.S."/>
            <person name="Leather S."/>
            <person name="Moule S."/>
            <person name="O'Gaora P."/>
            <person name="Parry C."/>
            <person name="Quail M.A."/>
            <person name="Rutherford K.M."/>
            <person name="Simmonds M."/>
            <person name="Skelton J."/>
            <person name="Stevens K."/>
            <person name="Whitehead S."/>
            <person name="Barrell B.G."/>
        </authorList>
    </citation>
    <scope>NUCLEOTIDE SEQUENCE [LARGE SCALE GENOMIC DNA]</scope>
    <source>
        <strain>CT18</strain>
    </source>
</reference>
<reference key="3">
    <citation type="journal article" date="2003" name="J. Bacteriol.">
        <title>Comparative genomics of Salmonella enterica serovar Typhi strains Ty2 and CT18.</title>
        <authorList>
            <person name="Deng W."/>
            <person name="Liou S.-R."/>
            <person name="Plunkett G. III"/>
            <person name="Mayhew G.F."/>
            <person name="Rose D.J."/>
            <person name="Burland V."/>
            <person name="Kodoyianni V."/>
            <person name="Schwartz D.C."/>
            <person name="Blattner F.R."/>
        </authorList>
    </citation>
    <scope>NUCLEOTIDE SEQUENCE [LARGE SCALE GENOMIC DNA]</scope>
    <source>
        <strain>ATCC 700931 / Ty2</strain>
    </source>
</reference>
<feature type="signal peptide" evidence="2">
    <location>
        <begin position="1"/>
        <end position="21"/>
    </location>
</feature>
<feature type="chain" id="PRO_0000025255" description="Outer membrane protein S2">
    <location>
        <begin position="22"/>
        <end position="383"/>
    </location>
</feature>
<evidence type="ECO:0000250" key="1"/>
<evidence type="ECO:0000255" key="2"/>
<evidence type="ECO:0000305" key="3"/>
<keyword id="KW-0998">Cell outer membrane</keyword>
<keyword id="KW-0406">Ion transport</keyword>
<keyword id="KW-0472">Membrane</keyword>
<keyword id="KW-0626">Porin</keyword>
<keyword id="KW-0732">Signal</keyword>
<keyword id="KW-0812">Transmembrane</keyword>
<keyword id="KW-1134">Transmembrane beta strand</keyword>
<keyword id="KW-0813">Transport</keyword>
<protein>
    <recommendedName>
        <fullName>Outer membrane protein S2</fullName>
    </recommendedName>
</protein>
<organism>
    <name type="scientific">Salmonella typhi</name>
    <dbReference type="NCBI Taxonomy" id="90370"/>
    <lineage>
        <taxon>Bacteria</taxon>
        <taxon>Pseudomonadati</taxon>
        <taxon>Pseudomonadota</taxon>
        <taxon>Gammaproteobacteria</taxon>
        <taxon>Enterobacterales</taxon>
        <taxon>Enterobacteriaceae</taxon>
        <taxon>Salmonella</taxon>
    </lineage>
</organism>
<sequence length="383" mass="42183">MKRKVLALVIPALLAAGAAHAAEIYNKDGNKLDLYGKVDGLHYFSDDSSKDGDQTYMRVGFKGETQINDQLTGYGQWEYNVQANTTEGEGANSWTRLAFAGLKFGDYGSFDYGRNYGVLYDVEGWTDMLPEFGGDSYTYADNYMTGRANGVATYRNTDFFGLVDGLNFALQYQGKNESQSADDVNIGTNNRNNGDDIRYDNGDGFGISTTYDIGMGFSAGAAYTTSDRTNEQVNAGGTIAGGDKADAWTAGLKYDANNIYLATMYSETRNMTPYGKTDKGYDGGVANKTQNFEVTAQYQFDFGLRPAVSFLMSKGKDLTYNNVNGDDKDLVKYADVGATYYFNKNFSTYVDYKINLLDDDDPFYKDAGISTDDIVALGMVYQF</sequence>
<proteinExistence type="inferred from homology"/>
<accession>Q56111</accession>
<gene>
    <name type="primary">ompS2</name>
    <name type="ordered locus">STY1649</name>
    <name type="ordered locus">t1341</name>
</gene>
<comment type="function">
    <text evidence="1">Forms pores that allow passive diffusion of small molecules across the outer membrane.</text>
</comment>
<comment type="subunit">
    <text evidence="1">Homotrimer.</text>
</comment>
<comment type="subcellular location">
    <subcellularLocation>
        <location evidence="1">Cell outer membrane</location>
        <topology evidence="1">Multi-pass membrane protein</topology>
    </subcellularLocation>
</comment>
<comment type="similarity">
    <text evidence="3">Belongs to the Gram-negative porin family.</text>
</comment>